<name>TFKL2_HUMAN</name>
<sequence length="198" mass="21962">METGRQTGVSAEMFAMPRDLKGSKKDGIPEDLDGNLEEPRDQEGELRSEDVMDLTEGDNEASASAPPAAKRRKTDTKGKKERKPTVDAEEAQRMTTLLSAMSEEQLSRYEVCRRSAFPKACIAGLMRSITGRSVSENVAIAMAGIAKVFVGEVVEEALDVCEMWGEMPPLQPKHLREAVRRLKPKGLFPNSNYKKIMF</sequence>
<proteinExistence type="evidence at transcript level"/>
<evidence type="ECO:0000256" key="1">
    <source>
        <dbReference type="SAM" id="MobiDB-lite"/>
    </source>
</evidence>
<evidence type="ECO:0000269" key="2">
    <source>
    </source>
</evidence>
<evidence type="ECO:0000305" key="3"/>
<evidence type="ECO:0000312" key="4">
    <source>
        <dbReference type="HGNC" id="HGNC:53845"/>
    </source>
</evidence>
<gene>
    <name evidence="4" type="primary">TAF11L2</name>
</gene>
<reference key="1">
    <citation type="journal article" date="2004" name="Nature">
        <title>The DNA sequence and comparative analysis of human chromosome 5.</title>
        <authorList>
            <person name="Schmutz J."/>
            <person name="Martin J."/>
            <person name="Terry A."/>
            <person name="Couronne O."/>
            <person name="Grimwood J."/>
            <person name="Lowry S."/>
            <person name="Gordon L.A."/>
            <person name="Scott D."/>
            <person name="Xie G."/>
            <person name="Huang W."/>
            <person name="Hellsten U."/>
            <person name="Tran-Gyamfi M."/>
            <person name="She X."/>
            <person name="Prabhakar S."/>
            <person name="Aerts A."/>
            <person name="Altherr M."/>
            <person name="Bajorek E."/>
            <person name="Black S."/>
            <person name="Branscomb E."/>
            <person name="Caoile C."/>
            <person name="Challacombe J.F."/>
            <person name="Chan Y.M."/>
            <person name="Denys M."/>
            <person name="Detter J.C."/>
            <person name="Escobar J."/>
            <person name="Flowers D."/>
            <person name="Fotopulos D."/>
            <person name="Glavina T."/>
            <person name="Gomez M."/>
            <person name="Gonzales E."/>
            <person name="Goodstein D."/>
            <person name="Grigoriev I."/>
            <person name="Groza M."/>
            <person name="Hammon N."/>
            <person name="Hawkins T."/>
            <person name="Haydu L."/>
            <person name="Israni S."/>
            <person name="Jett J."/>
            <person name="Kadner K."/>
            <person name="Kimball H."/>
            <person name="Kobayashi A."/>
            <person name="Lopez F."/>
            <person name="Lou Y."/>
            <person name="Martinez D."/>
            <person name="Medina C."/>
            <person name="Morgan J."/>
            <person name="Nandkeshwar R."/>
            <person name="Noonan J.P."/>
            <person name="Pitluck S."/>
            <person name="Pollard M."/>
            <person name="Predki P."/>
            <person name="Priest J."/>
            <person name="Ramirez L."/>
            <person name="Retterer J."/>
            <person name="Rodriguez A."/>
            <person name="Rogers S."/>
            <person name="Salamov A."/>
            <person name="Salazar A."/>
            <person name="Thayer N."/>
            <person name="Tice H."/>
            <person name="Tsai M."/>
            <person name="Ustaszewska A."/>
            <person name="Vo N."/>
            <person name="Wheeler J."/>
            <person name="Wu K."/>
            <person name="Yang J."/>
            <person name="Dickson M."/>
            <person name="Cheng J.-F."/>
            <person name="Eichler E.E."/>
            <person name="Olsen A."/>
            <person name="Pennacchio L.A."/>
            <person name="Rokhsar D.S."/>
            <person name="Richardson P."/>
            <person name="Lucas S.M."/>
            <person name="Myers R.M."/>
            <person name="Rubin E.M."/>
        </authorList>
    </citation>
    <scope>NUCLEOTIDE SEQUENCE [LARGE SCALE GENOMIC DNA]</scope>
</reference>
<reference key="2">
    <citation type="submission" date="2005-09" db="EMBL/GenBank/DDBJ databases">
        <authorList>
            <person name="Mural R.J."/>
            <person name="Istrail S."/>
            <person name="Sutton G.G."/>
            <person name="Florea L."/>
            <person name="Halpern A.L."/>
            <person name="Mobarry C.M."/>
            <person name="Lippert R."/>
            <person name="Walenz B."/>
            <person name="Shatkay H."/>
            <person name="Dew I."/>
            <person name="Miller J.R."/>
            <person name="Flanigan M.J."/>
            <person name="Edwards N.J."/>
            <person name="Bolanos R."/>
            <person name="Fasulo D."/>
            <person name="Halldorsson B.V."/>
            <person name="Hannenhalli S."/>
            <person name="Turner R."/>
            <person name="Yooseph S."/>
            <person name="Lu F."/>
            <person name="Nusskern D.R."/>
            <person name="Shue B.C."/>
            <person name="Zheng X.H."/>
            <person name="Zhong F."/>
            <person name="Delcher A.L."/>
            <person name="Huson D.H."/>
            <person name="Kravitz S.A."/>
            <person name="Mouchard L."/>
            <person name="Reinert K."/>
            <person name="Remington K.A."/>
            <person name="Clark A.G."/>
            <person name="Waterman M.S."/>
            <person name="Eichler E.E."/>
            <person name="Adams M.D."/>
            <person name="Hunkapiller M.W."/>
            <person name="Myers E.W."/>
            <person name="Venter J.C."/>
        </authorList>
    </citation>
    <scope>NUCLEOTIDE SEQUENCE [LARGE SCALE GENOMIC DNA]</scope>
</reference>
<reference key="3">
    <citation type="journal article" date="2010" name="BMC Genomics">
        <title>Expression, tandem repeat copy number variation and stability of four macrosatellite arrays in the human genome.</title>
        <authorList>
            <person name="Tremblay D.C."/>
            <person name="Alexander G. Jr."/>
            <person name="Moseley S."/>
            <person name="Chadwick B.P."/>
        </authorList>
    </citation>
    <scope>TISSUE SPECIFICITY</scope>
</reference>
<accession>A6NLC8</accession>
<dbReference type="EMBL" id="AC106774">
    <property type="status" value="NOT_ANNOTATED_CDS"/>
    <property type="molecule type" value="Genomic_DNA"/>
</dbReference>
<dbReference type="EMBL" id="CH471102">
    <property type="protein sequence ID" value="EAX08007.1"/>
    <property type="molecule type" value="Genomic_DNA"/>
</dbReference>
<dbReference type="CCDS" id="CCDS93688.1"/>
<dbReference type="RefSeq" id="NP_001388625.1">
    <property type="nucleotide sequence ID" value="NM_001401696.1"/>
</dbReference>
<dbReference type="SMR" id="A6NLC8"/>
<dbReference type="FunCoup" id="A6NLC8">
    <property type="interactions" value="70"/>
</dbReference>
<dbReference type="STRING" id="9606.ENSP00000492047"/>
<dbReference type="BioMuta" id="-"/>
<dbReference type="MassIVE" id="A6NLC8"/>
<dbReference type="PeptideAtlas" id="A6NLC8"/>
<dbReference type="Pumba" id="A6NLC8"/>
<dbReference type="Ensembl" id="ENST00000639081.1">
    <property type="protein sequence ID" value="ENSP00000492047.1"/>
    <property type="gene ID" value="ENSG00000284373.1"/>
</dbReference>
<dbReference type="GeneID" id="391742"/>
<dbReference type="MANE-Select" id="ENST00000639081.1">
    <property type="protein sequence ID" value="ENSP00000492047.1"/>
    <property type="RefSeq nucleotide sequence ID" value="NM_001401696.1"/>
    <property type="RefSeq protein sequence ID" value="NP_001388625.1"/>
</dbReference>
<dbReference type="AGR" id="HGNC:53845"/>
<dbReference type="GeneCards" id="TAF11L2"/>
<dbReference type="HGNC" id="HGNC:53845">
    <property type="gene designation" value="TAF11L2"/>
</dbReference>
<dbReference type="HPA" id="ENSG00000284373">
    <property type="expression patterns" value="Not detected"/>
</dbReference>
<dbReference type="neXtProt" id="NX_A6NLC8"/>
<dbReference type="VEuPathDB" id="HostDB:ENSG00000284373"/>
<dbReference type="GeneTree" id="ENSGT00390000013228"/>
<dbReference type="InParanoid" id="A6NLC8"/>
<dbReference type="OMA" id="CIAGLMR"/>
<dbReference type="OrthoDB" id="9532091at2759"/>
<dbReference type="PAN-GO" id="A6NLC8">
    <property type="GO annotations" value="3 GO annotations based on evolutionary models"/>
</dbReference>
<dbReference type="PhylomeDB" id="A6NLC8"/>
<dbReference type="Pharos" id="A6NLC8">
    <property type="development level" value="Tdark"/>
</dbReference>
<dbReference type="PRO" id="PR:A6NLC8"/>
<dbReference type="Proteomes" id="UP000005640">
    <property type="component" value="Chromosome 5"/>
</dbReference>
<dbReference type="RNAct" id="A6NLC8">
    <property type="molecule type" value="protein"/>
</dbReference>
<dbReference type="GO" id="GO:0005669">
    <property type="term" value="C:transcription factor TFIID complex"/>
    <property type="evidence" value="ECO:0000318"/>
    <property type="project" value="GO_Central"/>
</dbReference>
<dbReference type="GO" id="GO:0046982">
    <property type="term" value="F:protein heterodimerization activity"/>
    <property type="evidence" value="ECO:0007669"/>
    <property type="project" value="InterPro"/>
</dbReference>
<dbReference type="GO" id="GO:0051123">
    <property type="term" value="P:RNA polymerase II preinitiation complex assembly"/>
    <property type="evidence" value="ECO:0000318"/>
    <property type="project" value="GO_Central"/>
</dbReference>
<dbReference type="CDD" id="cd08048">
    <property type="entry name" value="HFD_TAF11"/>
    <property type="match status" value="1"/>
</dbReference>
<dbReference type="FunFam" id="1.10.20.10:FF:000025">
    <property type="entry name" value="Transcription initiation factor TFIID subunit 11"/>
    <property type="match status" value="1"/>
</dbReference>
<dbReference type="Gene3D" id="1.10.20.10">
    <property type="entry name" value="Histone, subunit A"/>
    <property type="match status" value="1"/>
</dbReference>
<dbReference type="InterPro" id="IPR009072">
    <property type="entry name" value="Histone-fold"/>
</dbReference>
<dbReference type="InterPro" id="IPR045127">
    <property type="entry name" value="TAF11-like"/>
</dbReference>
<dbReference type="InterPro" id="IPR006809">
    <property type="entry name" value="TAFII28_dom"/>
</dbReference>
<dbReference type="PANTHER" id="PTHR13218:SF15">
    <property type="entry name" value="TATA-BOX BINDING PROTEIN ASSOCIATED FACTOR 11 LIKE PROTEIN 2-RELATED"/>
    <property type="match status" value="1"/>
</dbReference>
<dbReference type="PANTHER" id="PTHR13218">
    <property type="entry name" value="TRANSCRIPTION INITIATION FACTOR TFIID SUBUNIT 11-RELATED"/>
    <property type="match status" value="1"/>
</dbReference>
<dbReference type="Pfam" id="PF04719">
    <property type="entry name" value="TAFII28"/>
    <property type="match status" value="1"/>
</dbReference>
<dbReference type="SUPFAM" id="SSF47113">
    <property type="entry name" value="Histone-fold"/>
    <property type="match status" value="1"/>
</dbReference>
<organism>
    <name type="scientific">Homo sapiens</name>
    <name type="common">Human</name>
    <dbReference type="NCBI Taxonomy" id="9606"/>
    <lineage>
        <taxon>Eukaryota</taxon>
        <taxon>Metazoa</taxon>
        <taxon>Chordata</taxon>
        <taxon>Craniata</taxon>
        <taxon>Vertebrata</taxon>
        <taxon>Euteleostomi</taxon>
        <taxon>Mammalia</taxon>
        <taxon>Eutheria</taxon>
        <taxon>Euarchontoglires</taxon>
        <taxon>Primates</taxon>
        <taxon>Haplorrhini</taxon>
        <taxon>Catarrhini</taxon>
        <taxon>Hominidae</taxon>
        <taxon>Homo</taxon>
    </lineage>
</organism>
<keyword id="KW-1185">Reference proteome</keyword>
<feature type="chain" id="PRO_0000332742" description="TATA-box binding protein associated factor 11 like protein 2">
    <location>
        <begin position="1"/>
        <end position="198"/>
    </location>
</feature>
<feature type="region of interest" description="Disordered" evidence="1">
    <location>
        <begin position="1"/>
        <end position="89"/>
    </location>
</feature>
<feature type="compositionally biased region" description="Basic and acidic residues" evidence="1">
    <location>
        <begin position="18"/>
        <end position="28"/>
    </location>
</feature>
<feature type="compositionally biased region" description="Basic and acidic residues" evidence="1">
    <location>
        <begin position="37"/>
        <end position="50"/>
    </location>
</feature>
<feature type="compositionally biased region" description="Basic and acidic residues" evidence="1">
    <location>
        <begin position="75"/>
        <end position="89"/>
    </location>
</feature>
<protein>
    <recommendedName>
        <fullName evidence="3">TATA-box binding protein associated factor 11 like protein 2</fullName>
    </recommendedName>
</protein>
<comment type="tissue specificity">
    <text evidence="2">Expressed in fetal brain and testis.</text>
</comment>
<comment type="similarity">
    <text evidence="3">Belongs to the TAF11 family.</text>
</comment>